<sequence>MLVTGLEILRKARAEGYGVGAFNTNNMEFTQAILEAAEEMKSPVILALSEGAMKYGGRALTRMVVALAQEARVPVAVHLDHGSSYESVLKALREGFTSVMIDKSHEDFETNVRETKRVVEAAHAVGVTVEAELGRLAGIEEHVAVDEKDALLTNPEEARIFMERTGADYLAVAIGTSHGAYKGKGRPFIDHPRLARIAKLVPAPLVLHGASAVPQELVERFRAAGGEIGEASGIHPEDIKKAISLGIAKINTDTDLRLAFTALVRETLGKNPKEFDPRKYLGPAREAVKEVVKSRMELFGSVGRA</sequence>
<gene>
    <name evidence="4" type="primary">fba</name>
</gene>
<comment type="function">
    <text evidence="1">Catalyzes the aldol condensation of dihydroxyacetone phosphate (DHAP or glycerone-phosphate) with glyceraldehyde 3-phosphate (G3P) to form fructose 1,6-bisphosphate (FBP) in gluconeogenesis and the reverse reaction in glycolysis.</text>
</comment>
<comment type="catalytic activity">
    <reaction evidence="3">
        <text>beta-D-fructose 1,6-bisphosphate = D-glyceraldehyde 3-phosphate + dihydroxyacetone phosphate</text>
        <dbReference type="Rhea" id="RHEA:14729"/>
        <dbReference type="ChEBI" id="CHEBI:32966"/>
        <dbReference type="ChEBI" id="CHEBI:57642"/>
        <dbReference type="ChEBI" id="CHEBI:59776"/>
        <dbReference type="EC" id="4.1.2.13"/>
    </reaction>
</comment>
<comment type="cofactor">
    <cofactor evidence="1">
        <name>Zn(2+)</name>
        <dbReference type="ChEBI" id="CHEBI:29105"/>
    </cofactor>
    <text evidence="1">Binds 2 Zn(2+) ions per subunit. One is catalytic and the other provides a structural contribution.</text>
</comment>
<comment type="pathway">
    <text>Carbohydrate degradation; glycolysis; D-glyceraldehyde 3-phosphate and glycerone phosphate from D-glucose: step 4/4.</text>
</comment>
<comment type="subunit">
    <text evidence="2">Homotetramer.</text>
</comment>
<comment type="similarity">
    <text evidence="3">Belongs to the class II fructose-bisphosphate aldolase family.</text>
</comment>
<organism>
    <name type="scientific">Thermus caldophilus</name>
    <dbReference type="NCBI Taxonomy" id="272"/>
    <lineage>
        <taxon>Bacteria</taxon>
        <taxon>Thermotogati</taxon>
        <taxon>Deinococcota</taxon>
        <taxon>Deinococci</taxon>
        <taxon>Thermales</taxon>
        <taxon>Thermaceae</taxon>
        <taxon>Thermus</taxon>
    </lineage>
</organism>
<keyword id="KW-0002">3D-structure</keyword>
<keyword id="KW-0324">Glycolysis</keyword>
<keyword id="KW-0456">Lyase</keyword>
<keyword id="KW-0479">Metal-binding</keyword>
<keyword id="KW-0862">Zinc</keyword>
<dbReference type="EC" id="4.1.2.13"/>
<dbReference type="EMBL" id="AJ621816">
    <property type="protein sequence ID" value="CAF32659.1"/>
    <property type="molecule type" value="Genomic_DNA"/>
</dbReference>
<dbReference type="EMBL" id="AY526903">
    <property type="protein sequence ID" value="AAS19362.1"/>
    <property type="molecule type" value="Genomic_DNA"/>
</dbReference>
<dbReference type="PDB" id="2FJK">
    <property type="method" value="X-ray"/>
    <property type="resolution" value="2.20 A"/>
    <property type="chains" value="A/B/C/D=1-305"/>
</dbReference>
<dbReference type="PDBsum" id="2FJK"/>
<dbReference type="SMR" id="Q703I2"/>
<dbReference type="BRENDA" id="4.1.2.13">
    <property type="organism ID" value="6330"/>
</dbReference>
<dbReference type="UniPathway" id="UPA00109">
    <property type="reaction ID" value="UER00183"/>
</dbReference>
<dbReference type="EvolutionaryTrace" id="Q703I2"/>
<dbReference type="GO" id="GO:0004332">
    <property type="term" value="F:fructose-bisphosphate aldolase activity"/>
    <property type="evidence" value="ECO:0007669"/>
    <property type="project" value="UniProtKB-EC"/>
</dbReference>
<dbReference type="GO" id="GO:0008270">
    <property type="term" value="F:zinc ion binding"/>
    <property type="evidence" value="ECO:0007669"/>
    <property type="project" value="InterPro"/>
</dbReference>
<dbReference type="GO" id="GO:0030388">
    <property type="term" value="P:fructose 1,6-bisphosphate metabolic process"/>
    <property type="evidence" value="ECO:0007669"/>
    <property type="project" value="InterPro"/>
</dbReference>
<dbReference type="GO" id="GO:0006096">
    <property type="term" value="P:glycolytic process"/>
    <property type="evidence" value="ECO:0007669"/>
    <property type="project" value="UniProtKB-UniPathway"/>
</dbReference>
<dbReference type="CDD" id="cd00947">
    <property type="entry name" value="TBP_aldolase_IIB"/>
    <property type="match status" value="1"/>
</dbReference>
<dbReference type="Gene3D" id="3.20.20.70">
    <property type="entry name" value="Aldolase class I"/>
    <property type="match status" value="1"/>
</dbReference>
<dbReference type="InterPro" id="IPR013785">
    <property type="entry name" value="Aldolase_TIM"/>
</dbReference>
<dbReference type="InterPro" id="IPR050246">
    <property type="entry name" value="Class_II_FBP_aldolase"/>
</dbReference>
<dbReference type="InterPro" id="IPR000771">
    <property type="entry name" value="FBA_II"/>
</dbReference>
<dbReference type="InterPro" id="IPR011289">
    <property type="entry name" value="Fruc_bis_ald_class-2"/>
</dbReference>
<dbReference type="NCBIfam" id="TIGR00167">
    <property type="entry name" value="cbbA"/>
    <property type="match status" value="1"/>
</dbReference>
<dbReference type="NCBIfam" id="TIGR01859">
    <property type="entry name" value="fruc_bis_ald"/>
    <property type="match status" value="1"/>
</dbReference>
<dbReference type="PANTHER" id="PTHR30304">
    <property type="entry name" value="D-TAGATOSE-1,6-BISPHOSPHATE ALDOLASE"/>
    <property type="match status" value="1"/>
</dbReference>
<dbReference type="PANTHER" id="PTHR30304:SF0">
    <property type="entry name" value="D-TAGATOSE-1,6-BISPHOSPHATE ALDOLASE SUBUNIT GATY-RELATED"/>
    <property type="match status" value="1"/>
</dbReference>
<dbReference type="Pfam" id="PF01116">
    <property type="entry name" value="F_bP_aldolase"/>
    <property type="match status" value="1"/>
</dbReference>
<dbReference type="PIRSF" id="PIRSF001359">
    <property type="entry name" value="F_bP_aldolase_II"/>
    <property type="match status" value="1"/>
</dbReference>
<dbReference type="SUPFAM" id="SSF51569">
    <property type="entry name" value="Aldolase"/>
    <property type="match status" value="1"/>
</dbReference>
<feature type="chain" id="PRO_0000178752" description="Fructose-bisphosphate aldolase">
    <location>
        <begin position="1"/>
        <end position="305"/>
    </location>
</feature>
<feature type="active site" description="Proton donor" evidence="1">
    <location>
        <position position="80"/>
    </location>
</feature>
<feature type="binding site" evidence="1">
    <location>
        <position position="49"/>
    </location>
    <ligand>
        <name>D-glyceraldehyde 3-phosphate</name>
        <dbReference type="ChEBI" id="CHEBI:59776"/>
    </ligand>
</feature>
<feature type="binding site" evidence="1">
    <location>
        <position position="81"/>
    </location>
    <ligand>
        <name>Zn(2+)</name>
        <dbReference type="ChEBI" id="CHEBI:29105"/>
        <label>1</label>
        <note>catalytic</note>
    </ligand>
</feature>
<feature type="binding site" evidence="1">
    <location>
        <position position="102"/>
    </location>
    <ligand>
        <name>Zn(2+)</name>
        <dbReference type="ChEBI" id="CHEBI:29105"/>
        <label>2</label>
    </ligand>
</feature>
<feature type="binding site" evidence="1">
    <location>
        <position position="132"/>
    </location>
    <ligand>
        <name>Zn(2+)</name>
        <dbReference type="ChEBI" id="CHEBI:29105"/>
        <label>2</label>
    </ligand>
</feature>
<feature type="binding site" evidence="1">
    <location>
        <position position="178"/>
    </location>
    <ligand>
        <name>Zn(2+)</name>
        <dbReference type="ChEBI" id="CHEBI:29105"/>
        <label>1</label>
        <note>catalytic</note>
    </ligand>
</feature>
<feature type="binding site" evidence="1">
    <location>
        <position position="179"/>
    </location>
    <ligand>
        <name>dihydroxyacetone phosphate</name>
        <dbReference type="ChEBI" id="CHEBI:57642"/>
    </ligand>
</feature>
<feature type="binding site" evidence="1">
    <location>
        <position position="208"/>
    </location>
    <ligand>
        <name>Zn(2+)</name>
        <dbReference type="ChEBI" id="CHEBI:29105"/>
        <label>1</label>
        <note>catalytic</note>
    </ligand>
</feature>
<feature type="binding site" evidence="1">
    <location>
        <begin position="209"/>
        <end position="211"/>
    </location>
    <ligand>
        <name>dihydroxyacetone phosphate</name>
        <dbReference type="ChEBI" id="CHEBI:57642"/>
    </ligand>
</feature>
<feature type="binding site" evidence="1">
    <location>
        <begin position="251"/>
        <end position="254"/>
    </location>
    <ligand>
        <name>dihydroxyacetone phosphate</name>
        <dbReference type="ChEBI" id="CHEBI:57642"/>
    </ligand>
</feature>
<feature type="helix" evidence="5">
    <location>
        <begin position="6"/>
        <end position="14"/>
    </location>
</feature>
<feature type="strand" evidence="5">
    <location>
        <begin position="19"/>
        <end position="23"/>
    </location>
</feature>
<feature type="helix" evidence="5">
    <location>
        <begin position="27"/>
        <end position="38"/>
    </location>
</feature>
<feature type="helix" evidence="5">
    <location>
        <begin position="39"/>
        <end position="41"/>
    </location>
</feature>
<feature type="strand" evidence="5">
    <location>
        <begin position="44"/>
        <end position="47"/>
    </location>
</feature>
<feature type="helix" evidence="5">
    <location>
        <begin position="50"/>
        <end position="68"/>
    </location>
</feature>
<feature type="strand" evidence="5">
    <location>
        <begin position="75"/>
        <end position="78"/>
    </location>
</feature>
<feature type="helix" evidence="5">
    <location>
        <begin position="85"/>
        <end position="93"/>
    </location>
</feature>
<feature type="strand" evidence="5">
    <location>
        <begin position="97"/>
        <end position="101"/>
    </location>
</feature>
<feature type="helix" evidence="5">
    <location>
        <begin position="108"/>
        <end position="124"/>
    </location>
</feature>
<feature type="strand" evidence="5">
    <location>
        <begin position="128"/>
        <end position="134"/>
    </location>
</feature>
<feature type="helix" evidence="5">
    <location>
        <begin position="146"/>
        <end position="150"/>
    </location>
</feature>
<feature type="helix" evidence="5">
    <location>
        <begin position="155"/>
        <end position="164"/>
    </location>
</feature>
<feature type="strand" evidence="5">
    <location>
        <begin position="178"/>
        <end position="181"/>
    </location>
</feature>
<feature type="strand" evidence="5">
    <location>
        <begin position="184"/>
        <end position="186"/>
    </location>
</feature>
<feature type="helix" evidence="5">
    <location>
        <begin position="191"/>
        <end position="200"/>
    </location>
</feature>
<feature type="strand" evidence="5">
    <location>
        <begin position="205"/>
        <end position="207"/>
    </location>
</feature>
<feature type="helix" evidence="5">
    <location>
        <begin position="215"/>
        <end position="223"/>
    </location>
</feature>
<feature type="helix" evidence="5">
    <location>
        <begin position="236"/>
        <end position="244"/>
    </location>
</feature>
<feature type="strand" evidence="5">
    <location>
        <begin position="247"/>
        <end position="252"/>
    </location>
</feature>
<feature type="helix" evidence="5">
    <location>
        <begin position="254"/>
        <end position="270"/>
    </location>
</feature>
<feature type="helix" evidence="5">
    <location>
        <begin position="277"/>
        <end position="299"/>
    </location>
</feature>
<protein>
    <recommendedName>
        <fullName>Fructose-bisphosphate aldolase</fullName>
        <shortName>FBP aldolase</shortName>
        <shortName>FBPA</shortName>
        <ecNumber>4.1.2.13</ecNumber>
    </recommendedName>
    <alternativeName>
        <fullName>Fructose-1,6-bisphosphate aldolase</fullName>
    </alternativeName>
</protein>
<reference evidence="3" key="1">
    <citation type="journal article" date="2003" name="Protein Pept. Lett.">
        <title>Crystallization and preliminary X-ray analysis of class II fructose-1,6-bisphosphate aldolase from Thermus caldophilus.</title>
        <authorList>
            <person name="Lee J.H."/>
            <person name="Im Y.J."/>
            <person name="Rho S.-H."/>
            <person name="Park S.H."/>
            <person name="Kim M.-K."/>
            <person name="Cho S.J."/>
            <person name="Kim T.-Y."/>
            <person name="Oh J.H."/>
            <person name="Shin H.-J."/>
            <person name="Lee D.-S."/>
            <person name="Eom S.H."/>
        </authorList>
    </citation>
    <scope>NUCLEOTIDE SEQUENCE [GENOMIC DNA]</scope>
    <scope>SUBUNIT</scope>
    <scope>X-RAY CRYSTALLOGRAPHY (2.2 ANGSTROMS)</scope>
</reference>
<accession>Q703I2</accession>
<accession>P83739</accession>
<name>ALF_THECA</name>
<evidence type="ECO:0000250" key="1"/>
<evidence type="ECO:0000269" key="2">
    <source>
    </source>
</evidence>
<evidence type="ECO:0000305" key="3"/>
<evidence type="ECO:0000312" key="4">
    <source>
        <dbReference type="EMBL" id="CAF32659.1"/>
    </source>
</evidence>
<evidence type="ECO:0007829" key="5">
    <source>
        <dbReference type="PDB" id="2FJK"/>
    </source>
</evidence>
<proteinExistence type="evidence at protein level"/>